<sequence length="357" mass="40512">MSLTRLLIKDFRNIENADLALSPGFNFLVGANGSGKTSVLEAIYTLGHGRAFRSLQPGRVIRHEQEAFVLHGRLQGEERETSIGLTKDKQGDSKVRIDGTDGHKIAELAHLMPMQLITPEGFTLLNGGPKYRRAFLDWGCFHNEVGFFTAWSNLKRLLKQRNAALRQVSRYEQLRPWDKELIPLAEQISTWRAEYSSAIAQDMADTCQQFLPEFSLTFSFQRGWEKETDYADVLERSFERDRMLTYTAHGPHKADFRIRADGAPVEDTLSRGQLKLLMCALRLAQGEFLTRESGRRCLYLIDDFASELDDARRGLLASRLKATQSQVFVSAISAEHVIDMSDENSKMFTVEKGKITD</sequence>
<gene>
    <name evidence="1" type="primary">recF</name>
    <name type="ordered locus">SPAB_04774</name>
</gene>
<comment type="function">
    <text evidence="1">The RecF protein is involved in DNA metabolism; it is required for DNA replication and normal SOS inducibility. RecF binds preferentially to single-stranded, linear DNA. It also seems to bind ATP.</text>
</comment>
<comment type="subcellular location">
    <subcellularLocation>
        <location evidence="1">Cytoplasm</location>
    </subcellularLocation>
</comment>
<comment type="similarity">
    <text evidence="1">Belongs to the RecF family.</text>
</comment>
<reference key="1">
    <citation type="submission" date="2007-11" db="EMBL/GenBank/DDBJ databases">
        <authorList>
            <consortium name="The Salmonella enterica serovar Paratyphi B Genome Sequencing Project"/>
            <person name="McClelland M."/>
            <person name="Sanderson E.K."/>
            <person name="Porwollik S."/>
            <person name="Spieth J."/>
            <person name="Clifton W.S."/>
            <person name="Fulton R."/>
            <person name="Cordes M."/>
            <person name="Wollam A."/>
            <person name="Shah N."/>
            <person name="Pepin K."/>
            <person name="Bhonagiri V."/>
            <person name="Nash W."/>
            <person name="Johnson M."/>
            <person name="Thiruvilangam P."/>
            <person name="Wilson R."/>
        </authorList>
    </citation>
    <scope>NUCLEOTIDE SEQUENCE [LARGE SCALE GENOMIC DNA]</scope>
    <source>
        <strain>ATCC BAA-1250 / SPB7</strain>
    </source>
</reference>
<protein>
    <recommendedName>
        <fullName evidence="1">DNA replication and repair protein RecF</fullName>
    </recommendedName>
</protein>
<dbReference type="EMBL" id="CP000886">
    <property type="protein sequence ID" value="ABX70085.1"/>
    <property type="molecule type" value="Genomic_DNA"/>
</dbReference>
<dbReference type="RefSeq" id="WP_000060082.1">
    <property type="nucleotide sequence ID" value="NC_010102.1"/>
</dbReference>
<dbReference type="SMR" id="A9MX74"/>
<dbReference type="KEGG" id="spq:SPAB_04774"/>
<dbReference type="PATRIC" id="fig|1016998.12.peg.4492"/>
<dbReference type="HOGENOM" id="CLU_040267_0_0_6"/>
<dbReference type="BioCyc" id="SENT1016998:SPAB_RS19385-MONOMER"/>
<dbReference type="Proteomes" id="UP000008556">
    <property type="component" value="Chromosome"/>
</dbReference>
<dbReference type="GO" id="GO:0005737">
    <property type="term" value="C:cytoplasm"/>
    <property type="evidence" value="ECO:0007669"/>
    <property type="project" value="UniProtKB-SubCell"/>
</dbReference>
<dbReference type="GO" id="GO:0005524">
    <property type="term" value="F:ATP binding"/>
    <property type="evidence" value="ECO:0007669"/>
    <property type="project" value="UniProtKB-UniRule"/>
</dbReference>
<dbReference type="GO" id="GO:0003697">
    <property type="term" value="F:single-stranded DNA binding"/>
    <property type="evidence" value="ECO:0007669"/>
    <property type="project" value="UniProtKB-UniRule"/>
</dbReference>
<dbReference type="GO" id="GO:0006260">
    <property type="term" value="P:DNA replication"/>
    <property type="evidence" value="ECO:0007669"/>
    <property type="project" value="UniProtKB-UniRule"/>
</dbReference>
<dbReference type="GO" id="GO:0000731">
    <property type="term" value="P:DNA synthesis involved in DNA repair"/>
    <property type="evidence" value="ECO:0007669"/>
    <property type="project" value="TreeGrafter"/>
</dbReference>
<dbReference type="GO" id="GO:0006302">
    <property type="term" value="P:double-strand break repair"/>
    <property type="evidence" value="ECO:0007669"/>
    <property type="project" value="TreeGrafter"/>
</dbReference>
<dbReference type="GO" id="GO:0009432">
    <property type="term" value="P:SOS response"/>
    <property type="evidence" value="ECO:0007669"/>
    <property type="project" value="UniProtKB-UniRule"/>
</dbReference>
<dbReference type="FunFam" id="1.20.1050.90:FF:000001">
    <property type="entry name" value="DNA replication and repair protein RecF"/>
    <property type="match status" value="1"/>
</dbReference>
<dbReference type="Gene3D" id="3.40.50.300">
    <property type="entry name" value="P-loop containing nucleotide triphosphate hydrolases"/>
    <property type="match status" value="1"/>
</dbReference>
<dbReference type="Gene3D" id="1.20.1050.90">
    <property type="entry name" value="RecF/RecN/SMC, N-terminal domain"/>
    <property type="match status" value="1"/>
</dbReference>
<dbReference type="HAMAP" id="MF_00365">
    <property type="entry name" value="RecF"/>
    <property type="match status" value="1"/>
</dbReference>
<dbReference type="InterPro" id="IPR001238">
    <property type="entry name" value="DNA-binding_RecF"/>
</dbReference>
<dbReference type="InterPro" id="IPR018078">
    <property type="entry name" value="DNA-binding_RecF_CS"/>
</dbReference>
<dbReference type="InterPro" id="IPR027417">
    <property type="entry name" value="P-loop_NTPase"/>
</dbReference>
<dbReference type="InterPro" id="IPR003395">
    <property type="entry name" value="RecF/RecN/SMC_N"/>
</dbReference>
<dbReference type="InterPro" id="IPR042174">
    <property type="entry name" value="RecF_2"/>
</dbReference>
<dbReference type="NCBIfam" id="TIGR00611">
    <property type="entry name" value="recf"/>
    <property type="match status" value="1"/>
</dbReference>
<dbReference type="PANTHER" id="PTHR32182">
    <property type="entry name" value="DNA REPLICATION AND REPAIR PROTEIN RECF"/>
    <property type="match status" value="1"/>
</dbReference>
<dbReference type="PANTHER" id="PTHR32182:SF0">
    <property type="entry name" value="DNA REPLICATION AND REPAIR PROTEIN RECF"/>
    <property type="match status" value="1"/>
</dbReference>
<dbReference type="Pfam" id="PF02463">
    <property type="entry name" value="SMC_N"/>
    <property type="match status" value="1"/>
</dbReference>
<dbReference type="SUPFAM" id="SSF52540">
    <property type="entry name" value="P-loop containing nucleoside triphosphate hydrolases"/>
    <property type="match status" value="1"/>
</dbReference>
<dbReference type="PROSITE" id="PS00617">
    <property type="entry name" value="RECF_1"/>
    <property type="match status" value="1"/>
</dbReference>
<dbReference type="PROSITE" id="PS00618">
    <property type="entry name" value="RECF_2"/>
    <property type="match status" value="1"/>
</dbReference>
<organism>
    <name type="scientific">Salmonella paratyphi B (strain ATCC BAA-1250 / SPB7)</name>
    <dbReference type="NCBI Taxonomy" id="1016998"/>
    <lineage>
        <taxon>Bacteria</taxon>
        <taxon>Pseudomonadati</taxon>
        <taxon>Pseudomonadota</taxon>
        <taxon>Gammaproteobacteria</taxon>
        <taxon>Enterobacterales</taxon>
        <taxon>Enterobacteriaceae</taxon>
        <taxon>Salmonella</taxon>
    </lineage>
</organism>
<accession>A9MX74</accession>
<name>RECF_SALPB</name>
<feature type="chain" id="PRO_1000079602" description="DNA replication and repair protein RecF">
    <location>
        <begin position="1"/>
        <end position="357"/>
    </location>
</feature>
<feature type="binding site" evidence="1">
    <location>
        <begin position="30"/>
        <end position="37"/>
    </location>
    <ligand>
        <name>ATP</name>
        <dbReference type="ChEBI" id="CHEBI:30616"/>
    </ligand>
</feature>
<keyword id="KW-0067">ATP-binding</keyword>
<keyword id="KW-0963">Cytoplasm</keyword>
<keyword id="KW-0227">DNA damage</keyword>
<keyword id="KW-0234">DNA repair</keyword>
<keyword id="KW-0235">DNA replication</keyword>
<keyword id="KW-0238">DNA-binding</keyword>
<keyword id="KW-0547">Nucleotide-binding</keyword>
<keyword id="KW-0742">SOS response</keyword>
<evidence type="ECO:0000255" key="1">
    <source>
        <dbReference type="HAMAP-Rule" id="MF_00365"/>
    </source>
</evidence>
<proteinExistence type="inferred from homology"/>